<protein>
    <recommendedName>
        <fullName evidence="1">Taurine import ATP-binding protein TauB</fullName>
        <ecNumber evidence="1">7.6.2.7</ecNumber>
    </recommendedName>
</protein>
<evidence type="ECO:0000255" key="1">
    <source>
        <dbReference type="HAMAP-Rule" id="MF_01714"/>
    </source>
</evidence>
<sequence length="260" mass="28094">MAKLCAQQVSVVYASRRGALTALENVSMSVGSGEIVVALGASGCGKSTLLSLLAGFQPPTSGRVSVDGAPVAGPGADRGVVFQDDALMPWLNVIENVAFGLRMQGVGRDARHARARDVLRLVKLAGFEQHRIDEISGGMRQRVGLARALAADPSFLLMDEPLGALDALTREHMQTLLLDVWRATGKGVFLITHSVEEAVLLATELLILSPRPGRIVARHSLDFARRYAHGEPMRSIKSDPRFTEIHLALVEQLMRETEEV</sequence>
<accession>Q3JKX3</accession>
<feature type="chain" id="PRO_0000275823" description="Taurine import ATP-binding protein TauB">
    <location>
        <begin position="1"/>
        <end position="260"/>
    </location>
</feature>
<feature type="domain" description="ABC transporter" evidence="1">
    <location>
        <begin position="6"/>
        <end position="235"/>
    </location>
</feature>
<feature type="binding site" evidence="1">
    <location>
        <begin position="40"/>
        <end position="47"/>
    </location>
    <ligand>
        <name>ATP</name>
        <dbReference type="ChEBI" id="CHEBI:30616"/>
    </ligand>
</feature>
<gene>
    <name evidence="1" type="primary">tauB</name>
    <name type="ordered locus">BURPS1710b_A0621</name>
</gene>
<dbReference type="EC" id="7.6.2.7" evidence="1"/>
<dbReference type="EMBL" id="CP000125">
    <property type="protein sequence ID" value="ABA52297.1"/>
    <property type="molecule type" value="Genomic_DNA"/>
</dbReference>
<dbReference type="RefSeq" id="WP_004188097.1">
    <property type="nucleotide sequence ID" value="NC_007435.1"/>
</dbReference>
<dbReference type="SMR" id="Q3JKX3"/>
<dbReference type="EnsemblBacteria" id="ABA52297">
    <property type="protein sequence ID" value="ABA52297"/>
    <property type="gene ID" value="BURPS1710b_A0621"/>
</dbReference>
<dbReference type="KEGG" id="bpm:BURPS1710b_A0621"/>
<dbReference type="HOGENOM" id="CLU_000604_1_22_4"/>
<dbReference type="Proteomes" id="UP000002700">
    <property type="component" value="Chromosome II"/>
</dbReference>
<dbReference type="GO" id="GO:0005886">
    <property type="term" value="C:plasma membrane"/>
    <property type="evidence" value="ECO:0007669"/>
    <property type="project" value="UniProtKB-SubCell"/>
</dbReference>
<dbReference type="GO" id="GO:0015411">
    <property type="term" value="F:ABC-type taurine transporter transporter activity"/>
    <property type="evidence" value="ECO:0007669"/>
    <property type="project" value="UniProtKB-EC"/>
</dbReference>
<dbReference type="GO" id="GO:0005524">
    <property type="term" value="F:ATP binding"/>
    <property type="evidence" value="ECO:0007669"/>
    <property type="project" value="UniProtKB-KW"/>
</dbReference>
<dbReference type="GO" id="GO:0016887">
    <property type="term" value="F:ATP hydrolysis activity"/>
    <property type="evidence" value="ECO:0007669"/>
    <property type="project" value="InterPro"/>
</dbReference>
<dbReference type="CDD" id="cd03293">
    <property type="entry name" value="ABC_NrtD_SsuB_transporters"/>
    <property type="match status" value="1"/>
</dbReference>
<dbReference type="Gene3D" id="3.40.50.300">
    <property type="entry name" value="P-loop containing nucleotide triphosphate hydrolases"/>
    <property type="match status" value="1"/>
</dbReference>
<dbReference type="InterPro" id="IPR003593">
    <property type="entry name" value="AAA+_ATPase"/>
</dbReference>
<dbReference type="InterPro" id="IPR003439">
    <property type="entry name" value="ABC_transporter-like_ATP-bd"/>
</dbReference>
<dbReference type="InterPro" id="IPR017871">
    <property type="entry name" value="ABC_transporter-like_CS"/>
</dbReference>
<dbReference type="InterPro" id="IPR050166">
    <property type="entry name" value="ABC_transporter_ATP-bind"/>
</dbReference>
<dbReference type="InterPro" id="IPR027417">
    <property type="entry name" value="P-loop_NTPase"/>
</dbReference>
<dbReference type="PANTHER" id="PTHR42788:SF18">
    <property type="entry name" value="TAURINE IMPORT ATP-BINDING PROTEIN TAUB"/>
    <property type="match status" value="1"/>
</dbReference>
<dbReference type="PANTHER" id="PTHR42788">
    <property type="entry name" value="TAURINE IMPORT ATP-BINDING PROTEIN-RELATED"/>
    <property type="match status" value="1"/>
</dbReference>
<dbReference type="Pfam" id="PF00005">
    <property type="entry name" value="ABC_tran"/>
    <property type="match status" value="1"/>
</dbReference>
<dbReference type="SMART" id="SM00382">
    <property type="entry name" value="AAA"/>
    <property type="match status" value="1"/>
</dbReference>
<dbReference type="SUPFAM" id="SSF52540">
    <property type="entry name" value="P-loop containing nucleoside triphosphate hydrolases"/>
    <property type="match status" value="1"/>
</dbReference>
<dbReference type="PROSITE" id="PS00211">
    <property type="entry name" value="ABC_TRANSPORTER_1"/>
    <property type="match status" value="1"/>
</dbReference>
<dbReference type="PROSITE" id="PS50893">
    <property type="entry name" value="ABC_TRANSPORTER_2"/>
    <property type="match status" value="1"/>
</dbReference>
<dbReference type="PROSITE" id="PS51250">
    <property type="entry name" value="TAUB"/>
    <property type="match status" value="1"/>
</dbReference>
<proteinExistence type="inferred from homology"/>
<name>TAUB_BURP1</name>
<comment type="function">
    <text evidence="1">Part of the ABC transporter complex TauABC involved in taurine import. Responsible for energy coupling to the transport system.</text>
</comment>
<comment type="catalytic activity">
    <reaction evidence="1">
        <text>taurine(out) + ATP + H2O = taurine(in) + ADP + phosphate + H(+)</text>
        <dbReference type="Rhea" id="RHEA:14613"/>
        <dbReference type="ChEBI" id="CHEBI:15377"/>
        <dbReference type="ChEBI" id="CHEBI:15378"/>
        <dbReference type="ChEBI" id="CHEBI:30616"/>
        <dbReference type="ChEBI" id="CHEBI:43474"/>
        <dbReference type="ChEBI" id="CHEBI:456216"/>
        <dbReference type="ChEBI" id="CHEBI:507393"/>
        <dbReference type="EC" id="7.6.2.7"/>
    </reaction>
</comment>
<comment type="subunit">
    <text evidence="1">The complex is composed of two ATP-binding proteins (TauB), two transmembrane proteins (TauC) and a solute-binding protein (TauA).</text>
</comment>
<comment type="subcellular location">
    <subcellularLocation>
        <location evidence="1">Cell inner membrane</location>
        <topology evidence="1">Peripheral membrane protein</topology>
    </subcellularLocation>
</comment>
<comment type="similarity">
    <text evidence="1">Belongs to the ABC transporter superfamily. Taurine importer (TC 3.A.1.17.1) family.</text>
</comment>
<reference key="1">
    <citation type="journal article" date="2010" name="Genome Biol. Evol.">
        <title>Continuing evolution of Burkholderia mallei through genome reduction and large-scale rearrangements.</title>
        <authorList>
            <person name="Losada L."/>
            <person name="Ronning C.M."/>
            <person name="DeShazer D."/>
            <person name="Woods D."/>
            <person name="Fedorova N."/>
            <person name="Kim H.S."/>
            <person name="Shabalina S.A."/>
            <person name="Pearson T.R."/>
            <person name="Brinkac L."/>
            <person name="Tan P."/>
            <person name="Nandi T."/>
            <person name="Crabtree J."/>
            <person name="Badger J."/>
            <person name="Beckstrom-Sternberg S."/>
            <person name="Saqib M."/>
            <person name="Schutzer S.E."/>
            <person name="Keim P."/>
            <person name="Nierman W.C."/>
        </authorList>
    </citation>
    <scope>NUCLEOTIDE SEQUENCE [LARGE SCALE GENOMIC DNA]</scope>
    <source>
        <strain>1710b</strain>
    </source>
</reference>
<keyword id="KW-0067">ATP-binding</keyword>
<keyword id="KW-0997">Cell inner membrane</keyword>
<keyword id="KW-1003">Cell membrane</keyword>
<keyword id="KW-0472">Membrane</keyword>
<keyword id="KW-0547">Nucleotide-binding</keyword>
<keyword id="KW-1278">Translocase</keyword>
<keyword id="KW-0813">Transport</keyword>
<organism>
    <name type="scientific">Burkholderia pseudomallei (strain 1710b)</name>
    <dbReference type="NCBI Taxonomy" id="320372"/>
    <lineage>
        <taxon>Bacteria</taxon>
        <taxon>Pseudomonadati</taxon>
        <taxon>Pseudomonadota</taxon>
        <taxon>Betaproteobacteria</taxon>
        <taxon>Burkholderiales</taxon>
        <taxon>Burkholderiaceae</taxon>
        <taxon>Burkholderia</taxon>
        <taxon>pseudomallei group</taxon>
    </lineage>
</organism>